<organism>
    <name type="scientific">Francisella tularensis subsp. novicida (strain U112)</name>
    <dbReference type="NCBI Taxonomy" id="401614"/>
    <lineage>
        <taxon>Bacteria</taxon>
        <taxon>Pseudomonadati</taxon>
        <taxon>Pseudomonadota</taxon>
        <taxon>Gammaproteobacteria</taxon>
        <taxon>Thiotrichales</taxon>
        <taxon>Francisellaceae</taxon>
        <taxon>Francisella</taxon>
    </lineage>
</organism>
<sequence>MSGNTFGKIFTVTTCGESHGDSLAAIIDGCPSNIPLCEADIQLELDRRKPGQSKFTTQRKEPDEVKIISGVFEGKTTGTPIGLIIKNQDQKSKDYSEIKDKFRPGHADYTYFKKYGIRDYRGGGRSSARETAMRVAAGAIAKKILKHYGIEIYGFCSQIGSLKIDFIDKDFINQNPFFIANKNAVPACEDLIHSIRKQGDSIGAEVTVVATGLEAGLGRPVFDRLDASIAYAMMSINAVKAVSIGDGFDCVAQKGSQHRDEITQQQGFLSNHAGGILGGISTGQDIIAKLAFKPTSSILQPGKSIDVQGNDTTVITKGRHDPCVGIRGVPIAEAMLALVLVDELLITRSYRD</sequence>
<dbReference type="EC" id="4.2.3.5" evidence="1"/>
<dbReference type="EMBL" id="CP000439">
    <property type="protein sequence ID" value="ABK89305.1"/>
    <property type="molecule type" value="Genomic_DNA"/>
</dbReference>
<dbReference type="RefSeq" id="WP_003020861.1">
    <property type="nucleotide sequence ID" value="NZ_CP009633.1"/>
</dbReference>
<dbReference type="SMR" id="A0Q4Z0"/>
<dbReference type="KEGG" id="ftn:FTN_0402"/>
<dbReference type="KEGG" id="ftx:AW25_1632"/>
<dbReference type="BioCyc" id="FTUL401614:G1G75-421-MONOMER"/>
<dbReference type="UniPathway" id="UPA00053">
    <property type="reaction ID" value="UER00090"/>
</dbReference>
<dbReference type="Proteomes" id="UP000000762">
    <property type="component" value="Chromosome"/>
</dbReference>
<dbReference type="GO" id="GO:0005829">
    <property type="term" value="C:cytosol"/>
    <property type="evidence" value="ECO:0007669"/>
    <property type="project" value="TreeGrafter"/>
</dbReference>
<dbReference type="GO" id="GO:0004107">
    <property type="term" value="F:chorismate synthase activity"/>
    <property type="evidence" value="ECO:0007669"/>
    <property type="project" value="UniProtKB-UniRule"/>
</dbReference>
<dbReference type="GO" id="GO:0010181">
    <property type="term" value="F:FMN binding"/>
    <property type="evidence" value="ECO:0007669"/>
    <property type="project" value="TreeGrafter"/>
</dbReference>
<dbReference type="GO" id="GO:0008652">
    <property type="term" value="P:amino acid biosynthetic process"/>
    <property type="evidence" value="ECO:0007669"/>
    <property type="project" value="UniProtKB-KW"/>
</dbReference>
<dbReference type="GO" id="GO:0009073">
    <property type="term" value="P:aromatic amino acid family biosynthetic process"/>
    <property type="evidence" value="ECO:0007669"/>
    <property type="project" value="UniProtKB-KW"/>
</dbReference>
<dbReference type="GO" id="GO:0009423">
    <property type="term" value="P:chorismate biosynthetic process"/>
    <property type="evidence" value="ECO:0007669"/>
    <property type="project" value="UniProtKB-UniRule"/>
</dbReference>
<dbReference type="CDD" id="cd07304">
    <property type="entry name" value="Chorismate_synthase"/>
    <property type="match status" value="1"/>
</dbReference>
<dbReference type="Gene3D" id="3.60.150.10">
    <property type="entry name" value="Chorismate synthase AroC"/>
    <property type="match status" value="1"/>
</dbReference>
<dbReference type="HAMAP" id="MF_00300">
    <property type="entry name" value="Chorismate_synth"/>
    <property type="match status" value="1"/>
</dbReference>
<dbReference type="InterPro" id="IPR000453">
    <property type="entry name" value="Chorismate_synth"/>
</dbReference>
<dbReference type="InterPro" id="IPR035904">
    <property type="entry name" value="Chorismate_synth_AroC_sf"/>
</dbReference>
<dbReference type="InterPro" id="IPR020541">
    <property type="entry name" value="Chorismate_synthase_CS"/>
</dbReference>
<dbReference type="NCBIfam" id="TIGR00033">
    <property type="entry name" value="aroC"/>
    <property type="match status" value="1"/>
</dbReference>
<dbReference type="NCBIfam" id="NF003793">
    <property type="entry name" value="PRK05382.1"/>
    <property type="match status" value="1"/>
</dbReference>
<dbReference type="PANTHER" id="PTHR21085">
    <property type="entry name" value="CHORISMATE SYNTHASE"/>
    <property type="match status" value="1"/>
</dbReference>
<dbReference type="PANTHER" id="PTHR21085:SF0">
    <property type="entry name" value="CHORISMATE SYNTHASE"/>
    <property type="match status" value="1"/>
</dbReference>
<dbReference type="Pfam" id="PF01264">
    <property type="entry name" value="Chorismate_synt"/>
    <property type="match status" value="1"/>
</dbReference>
<dbReference type="PIRSF" id="PIRSF001456">
    <property type="entry name" value="Chorismate_synth"/>
    <property type="match status" value="1"/>
</dbReference>
<dbReference type="SUPFAM" id="SSF103263">
    <property type="entry name" value="Chorismate synthase, AroC"/>
    <property type="match status" value="1"/>
</dbReference>
<dbReference type="PROSITE" id="PS00787">
    <property type="entry name" value="CHORISMATE_SYNTHASE_1"/>
    <property type="match status" value="1"/>
</dbReference>
<dbReference type="PROSITE" id="PS00788">
    <property type="entry name" value="CHORISMATE_SYNTHASE_2"/>
    <property type="match status" value="1"/>
</dbReference>
<dbReference type="PROSITE" id="PS00789">
    <property type="entry name" value="CHORISMATE_SYNTHASE_3"/>
    <property type="match status" value="1"/>
</dbReference>
<gene>
    <name evidence="1" type="primary">aroC</name>
    <name type="ordered locus">FTN_0402</name>
</gene>
<keyword id="KW-0028">Amino-acid biosynthesis</keyword>
<keyword id="KW-0057">Aromatic amino acid biosynthesis</keyword>
<keyword id="KW-0274">FAD</keyword>
<keyword id="KW-0285">Flavoprotein</keyword>
<keyword id="KW-0288">FMN</keyword>
<keyword id="KW-0456">Lyase</keyword>
<keyword id="KW-0521">NADP</keyword>
<reference key="1">
    <citation type="journal article" date="2007" name="Genome Biol.">
        <title>Comparison of Francisella tularensis genomes reveals evolutionary events associated with the emergence of human pathogenic strains.</title>
        <authorList>
            <person name="Rohmer L."/>
            <person name="Fong C."/>
            <person name="Abmayr S."/>
            <person name="Wasnick M."/>
            <person name="Larson Freeman T.J."/>
            <person name="Radey M."/>
            <person name="Guina T."/>
            <person name="Svensson K."/>
            <person name="Hayden H.S."/>
            <person name="Jacobs M."/>
            <person name="Gallagher L.A."/>
            <person name="Manoil C."/>
            <person name="Ernst R.K."/>
            <person name="Drees B."/>
            <person name="Buckley D."/>
            <person name="Haugen E."/>
            <person name="Bovee D."/>
            <person name="Zhou Y."/>
            <person name="Chang J."/>
            <person name="Levy R."/>
            <person name="Lim R."/>
            <person name="Gillett W."/>
            <person name="Guenthener D."/>
            <person name="Kang A."/>
            <person name="Shaffer S.A."/>
            <person name="Taylor G."/>
            <person name="Chen J."/>
            <person name="Gallis B."/>
            <person name="D'Argenio D.A."/>
            <person name="Forsman M."/>
            <person name="Olson M.V."/>
            <person name="Goodlett D.R."/>
            <person name="Kaul R."/>
            <person name="Miller S.I."/>
            <person name="Brittnacher M.J."/>
        </authorList>
    </citation>
    <scope>NUCLEOTIDE SEQUENCE [LARGE SCALE GENOMIC DNA]</scope>
    <source>
        <strain>U112</strain>
    </source>
</reference>
<proteinExistence type="inferred from homology"/>
<comment type="function">
    <text evidence="1">Catalyzes the anti-1,4-elimination of the C-3 phosphate and the C-6 proR hydrogen from 5-enolpyruvylshikimate-3-phosphate (EPSP) to yield chorismate, which is the branch point compound that serves as the starting substrate for the three terminal pathways of aromatic amino acid biosynthesis. This reaction introduces a second double bond into the aromatic ring system.</text>
</comment>
<comment type="catalytic activity">
    <reaction evidence="1">
        <text>5-O-(1-carboxyvinyl)-3-phosphoshikimate = chorismate + phosphate</text>
        <dbReference type="Rhea" id="RHEA:21020"/>
        <dbReference type="ChEBI" id="CHEBI:29748"/>
        <dbReference type="ChEBI" id="CHEBI:43474"/>
        <dbReference type="ChEBI" id="CHEBI:57701"/>
        <dbReference type="EC" id="4.2.3.5"/>
    </reaction>
</comment>
<comment type="cofactor">
    <cofactor evidence="1">
        <name>FMNH2</name>
        <dbReference type="ChEBI" id="CHEBI:57618"/>
    </cofactor>
    <text evidence="1">Reduced FMN (FMNH(2)).</text>
</comment>
<comment type="pathway">
    <text evidence="1">Metabolic intermediate biosynthesis; chorismate biosynthesis; chorismate from D-erythrose 4-phosphate and phosphoenolpyruvate: step 7/7.</text>
</comment>
<comment type="subunit">
    <text evidence="1">Homotetramer.</text>
</comment>
<comment type="similarity">
    <text evidence="1">Belongs to the chorismate synthase family.</text>
</comment>
<accession>A0Q4Z0</accession>
<evidence type="ECO:0000255" key="1">
    <source>
        <dbReference type="HAMAP-Rule" id="MF_00300"/>
    </source>
</evidence>
<name>AROC_FRATN</name>
<feature type="chain" id="PRO_1000022490" description="Chorismate synthase">
    <location>
        <begin position="1"/>
        <end position="352"/>
    </location>
</feature>
<feature type="binding site" evidence="1">
    <location>
        <position position="48"/>
    </location>
    <ligand>
        <name>NADP(+)</name>
        <dbReference type="ChEBI" id="CHEBI:58349"/>
    </ligand>
</feature>
<feature type="binding site" evidence="1">
    <location>
        <begin position="125"/>
        <end position="127"/>
    </location>
    <ligand>
        <name>FMN</name>
        <dbReference type="ChEBI" id="CHEBI:58210"/>
    </ligand>
</feature>
<feature type="binding site" evidence="1">
    <location>
        <begin position="237"/>
        <end position="238"/>
    </location>
    <ligand>
        <name>FMN</name>
        <dbReference type="ChEBI" id="CHEBI:58210"/>
    </ligand>
</feature>
<feature type="binding site" evidence="1">
    <location>
        <position position="278"/>
    </location>
    <ligand>
        <name>FMN</name>
        <dbReference type="ChEBI" id="CHEBI:58210"/>
    </ligand>
</feature>
<feature type="binding site" evidence="1">
    <location>
        <begin position="293"/>
        <end position="297"/>
    </location>
    <ligand>
        <name>FMN</name>
        <dbReference type="ChEBI" id="CHEBI:58210"/>
    </ligand>
</feature>
<feature type="binding site" evidence="1">
    <location>
        <position position="319"/>
    </location>
    <ligand>
        <name>FMN</name>
        <dbReference type="ChEBI" id="CHEBI:58210"/>
    </ligand>
</feature>
<protein>
    <recommendedName>
        <fullName evidence="1">Chorismate synthase</fullName>
        <shortName evidence="1">CS</shortName>
        <ecNumber evidence="1">4.2.3.5</ecNumber>
    </recommendedName>
    <alternativeName>
        <fullName evidence="1">5-enolpyruvylshikimate-3-phosphate phospholyase</fullName>
    </alternativeName>
</protein>